<gene>
    <name evidence="1" type="primary">pepA</name>
    <name type="ordered locus">Tgr7_2140</name>
</gene>
<comment type="function">
    <text evidence="1">Presumably involved in the processing and regular turnover of intracellular proteins. Catalyzes the removal of unsubstituted N-terminal amino acids from various peptides.</text>
</comment>
<comment type="catalytic activity">
    <reaction evidence="1">
        <text>Release of an N-terminal amino acid, Xaa-|-Yaa-, in which Xaa is preferably Leu, but may be other amino acids including Pro although not Arg or Lys, and Yaa may be Pro. Amino acid amides and methyl esters are also readily hydrolyzed, but rates on arylamides are exceedingly low.</text>
        <dbReference type="EC" id="3.4.11.1"/>
    </reaction>
</comment>
<comment type="catalytic activity">
    <reaction evidence="1">
        <text>Release of an N-terminal amino acid, preferentially leucine, but not glutamic or aspartic acids.</text>
        <dbReference type="EC" id="3.4.11.10"/>
    </reaction>
</comment>
<comment type="cofactor">
    <cofactor evidence="1">
        <name>Mn(2+)</name>
        <dbReference type="ChEBI" id="CHEBI:29035"/>
    </cofactor>
    <text evidence="1">Binds 2 manganese ions per subunit.</text>
</comment>
<comment type="subcellular location">
    <subcellularLocation>
        <location evidence="1">Cytoplasm</location>
    </subcellularLocation>
</comment>
<comment type="similarity">
    <text evidence="1">Belongs to the peptidase M17 family.</text>
</comment>
<evidence type="ECO:0000255" key="1">
    <source>
        <dbReference type="HAMAP-Rule" id="MF_00181"/>
    </source>
</evidence>
<reference key="1">
    <citation type="journal article" date="2011" name="Stand. Genomic Sci.">
        <title>Complete genome sequence of 'Thioalkalivibrio sulfidophilus' HL-EbGr7.</title>
        <authorList>
            <person name="Muyzer G."/>
            <person name="Sorokin D.Y."/>
            <person name="Mavromatis K."/>
            <person name="Lapidus A."/>
            <person name="Clum A."/>
            <person name="Ivanova N."/>
            <person name="Pati A."/>
            <person name="d'Haeseleer P."/>
            <person name="Woyke T."/>
            <person name="Kyrpides N.C."/>
        </authorList>
    </citation>
    <scope>NUCLEOTIDE SEQUENCE [LARGE SCALE GENOMIC DNA]</scope>
    <source>
        <strain>HL-EbGR7</strain>
    </source>
</reference>
<accession>B8GTX6</accession>
<sequence length="496" mass="53570">MEFSVKSGNPEKQRSACVVVGVFDRRKLSSAARVLDKASGGALSTILRRGDMDGEKGQTLWLYNLPNTLCERVLLVGCGKERDFDEPAYRSVIATVARTVNKSGAVEAVNYLTDLPVKGRDTLWKISQAVTITQDSLYSFQQLKSKKEDTQRPLKRIILSVPSRADLLPGEDAVRVATAISVGTKLTRDLANLPGNICNPTYLAEQALQLKKTYKGLKVEILEEADMEKLGMGALLSVSRGSEQPAKLITLEYRGGRKDAKPVVLVGKGITFDTGGISLKPGAEMDEMKFDMCGAASVLGVMKAVAEMMLPINLVGVVAAAENMPDGKATRPGDVVTSMSGQTIEILNTDAEGRLVLCDALSYVERFDPDVVIDIATLTGACIIALGHQATGLLSNHSPLANDLLGAGKQSYDRAWELPLWDEYQEQLKSNFADMANIGGRPAGTITAACFLSRFTKKYKWAHLDIAGVAWKSGKEKGATGRPVPLLMQYLLNKAS</sequence>
<dbReference type="EC" id="3.4.11.1" evidence="1"/>
<dbReference type="EC" id="3.4.11.10" evidence="1"/>
<dbReference type="EMBL" id="CP001339">
    <property type="protein sequence ID" value="ACL73220.1"/>
    <property type="molecule type" value="Genomic_DNA"/>
</dbReference>
<dbReference type="RefSeq" id="WP_012638698.1">
    <property type="nucleotide sequence ID" value="NC_011901.1"/>
</dbReference>
<dbReference type="SMR" id="B8GTX6"/>
<dbReference type="STRING" id="396588.Tgr7_2140"/>
<dbReference type="MEROPS" id="M17.003"/>
<dbReference type="KEGG" id="tgr:Tgr7_2140"/>
<dbReference type="eggNOG" id="COG0260">
    <property type="taxonomic scope" value="Bacteria"/>
</dbReference>
<dbReference type="HOGENOM" id="CLU_013734_2_2_6"/>
<dbReference type="OrthoDB" id="9809354at2"/>
<dbReference type="Proteomes" id="UP000002383">
    <property type="component" value="Chromosome"/>
</dbReference>
<dbReference type="GO" id="GO:0005737">
    <property type="term" value="C:cytoplasm"/>
    <property type="evidence" value="ECO:0007669"/>
    <property type="project" value="UniProtKB-SubCell"/>
</dbReference>
<dbReference type="GO" id="GO:0030145">
    <property type="term" value="F:manganese ion binding"/>
    <property type="evidence" value="ECO:0007669"/>
    <property type="project" value="UniProtKB-UniRule"/>
</dbReference>
<dbReference type="GO" id="GO:0070006">
    <property type="term" value="F:metalloaminopeptidase activity"/>
    <property type="evidence" value="ECO:0007669"/>
    <property type="project" value="InterPro"/>
</dbReference>
<dbReference type="GO" id="GO:0006508">
    <property type="term" value="P:proteolysis"/>
    <property type="evidence" value="ECO:0007669"/>
    <property type="project" value="UniProtKB-KW"/>
</dbReference>
<dbReference type="CDD" id="cd00433">
    <property type="entry name" value="Peptidase_M17"/>
    <property type="match status" value="1"/>
</dbReference>
<dbReference type="FunFam" id="3.40.630.10:FF:000004">
    <property type="entry name" value="Probable cytosol aminopeptidase"/>
    <property type="match status" value="1"/>
</dbReference>
<dbReference type="Gene3D" id="3.40.220.10">
    <property type="entry name" value="Leucine Aminopeptidase, subunit E, domain 1"/>
    <property type="match status" value="1"/>
</dbReference>
<dbReference type="Gene3D" id="3.40.630.10">
    <property type="entry name" value="Zn peptidases"/>
    <property type="match status" value="1"/>
</dbReference>
<dbReference type="HAMAP" id="MF_00181">
    <property type="entry name" value="Cytosol_peptidase_M17"/>
    <property type="match status" value="1"/>
</dbReference>
<dbReference type="InterPro" id="IPR011356">
    <property type="entry name" value="Leucine_aapep/pepB"/>
</dbReference>
<dbReference type="InterPro" id="IPR043472">
    <property type="entry name" value="Macro_dom-like"/>
</dbReference>
<dbReference type="InterPro" id="IPR000819">
    <property type="entry name" value="Peptidase_M17_C"/>
</dbReference>
<dbReference type="InterPro" id="IPR023042">
    <property type="entry name" value="Peptidase_M17_leu_NH2_pept"/>
</dbReference>
<dbReference type="InterPro" id="IPR008283">
    <property type="entry name" value="Peptidase_M17_N"/>
</dbReference>
<dbReference type="NCBIfam" id="NF002073">
    <property type="entry name" value="PRK00913.1-2"/>
    <property type="match status" value="1"/>
</dbReference>
<dbReference type="NCBIfam" id="NF002074">
    <property type="entry name" value="PRK00913.1-4"/>
    <property type="match status" value="1"/>
</dbReference>
<dbReference type="NCBIfam" id="NF002077">
    <property type="entry name" value="PRK00913.2-4"/>
    <property type="match status" value="1"/>
</dbReference>
<dbReference type="PANTHER" id="PTHR11963:SF23">
    <property type="entry name" value="CYTOSOL AMINOPEPTIDASE"/>
    <property type="match status" value="1"/>
</dbReference>
<dbReference type="PANTHER" id="PTHR11963">
    <property type="entry name" value="LEUCINE AMINOPEPTIDASE-RELATED"/>
    <property type="match status" value="1"/>
</dbReference>
<dbReference type="Pfam" id="PF00883">
    <property type="entry name" value="Peptidase_M17"/>
    <property type="match status" value="1"/>
</dbReference>
<dbReference type="Pfam" id="PF02789">
    <property type="entry name" value="Peptidase_M17_N"/>
    <property type="match status" value="1"/>
</dbReference>
<dbReference type="PRINTS" id="PR00481">
    <property type="entry name" value="LAMNOPPTDASE"/>
</dbReference>
<dbReference type="SUPFAM" id="SSF52949">
    <property type="entry name" value="Macro domain-like"/>
    <property type="match status" value="1"/>
</dbReference>
<dbReference type="SUPFAM" id="SSF53187">
    <property type="entry name" value="Zn-dependent exopeptidases"/>
    <property type="match status" value="1"/>
</dbReference>
<dbReference type="PROSITE" id="PS00631">
    <property type="entry name" value="CYTOSOL_AP"/>
    <property type="match status" value="1"/>
</dbReference>
<proteinExistence type="inferred from homology"/>
<feature type="chain" id="PRO_1000192726" description="Probable cytosol aminopeptidase">
    <location>
        <begin position="1"/>
        <end position="496"/>
    </location>
</feature>
<feature type="active site" evidence="1">
    <location>
        <position position="280"/>
    </location>
</feature>
<feature type="active site" evidence="1">
    <location>
        <position position="354"/>
    </location>
</feature>
<feature type="binding site" evidence="1">
    <location>
        <position position="268"/>
    </location>
    <ligand>
        <name>Mn(2+)</name>
        <dbReference type="ChEBI" id="CHEBI:29035"/>
        <label>2</label>
    </ligand>
</feature>
<feature type="binding site" evidence="1">
    <location>
        <position position="273"/>
    </location>
    <ligand>
        <name>Mn(2+)</name>
        <dbReference type="ChEBI" id="CHEBI:29035"/>
        <label>1</label>
    </ligand>
</feature>
<feature type="binding site" evidence="1">
    <location>
        <position position="273"/>
    </location>
    <ligand>
        <name>Mn(2+)</name>
        <dbReference type="ChEBI" id="CHEBI:29035"/>
        <label>2</label>
    </ligand>
</feature>
<feature type="binding site" evidence="1">
    <location>
        <position position="291"/>
    </location>
    <ligand>
        <name>Mn(2+)</name>
        <dbReference type="ChEBI" id="CHEBI:29035"/>
        <label>2</label>
    </ligand>
</feature>
<feature type="binding site" evidence="1">
    <location>
        <position position="350"/>
    </location>
    <ligand>
        <name>Mn(2+)</name>
        <dbReference type="ChEBI" id="CHEBI:29035"/>
        <label>1</label>
    </ligand>
</feature>
<feature type="binding site" evidence="1">
    <location>
        <position position="352"/>
    </location>
    <ligand>
        <name>Mn(2+)</name>
        <dbReference type="ChEBI" id="CHEBI:29035"/>
        <label>1</label>
    </ligand>
</feature>
<feature type="binding site" evidence="1">
    <location>
        <position position="352"/>
    </location>
    <ligand>
        <name>Mn(2+)</name>
        <dbReference type="ChEBI" id="CHEBI:29035"/>
        <label>2</label>
    </ligand>
</feature>
<organism>
    <name type="scientific">Thioalkalivibrio sulfidiphilus (strain HL-EbGR7)</name>
    <dbReference type="NCBI Taxonomy" id="396588"/>
    <lineage>
        <taxon>Bacteria</taxon>
        <taxon>Pseudomonadati</taxon>
        <taxon>Pseudomonadota</taxon>
        <taxon>Gammaproteobacteria</taxon>
        <taxon>Chromatiales</taxon>
        <taxon>Ectothiorhodospiraceae</taxon>
        <taxon>Thioalkalivibrio</taxon>
    </lineage>
</organism>
<name>AMPA_THISH</name>
<protein>
    <recommendedName>
        <fullName evidence="1">Probable cytosol aminopeptidase</fullName>
        <ecNumber evidence="1">3.4.11.1</ecNumber>
    </recommendedName>
    <alternativeName>
        <fullName evidence="1">Leucine aminopeptidase</fullName>
        <shortName evidence="1">LAP</shortName>
        <ecNumber evidence="1">3.4.11.10</ecNumber>
    </alternativeName>
    <alternativeName>
        <fullName evidence="1">Leucyl aminopeptidase</fullName>
    </alternativeName>
</protein>
<keyword id="KW-0031">Aminopeptidase</keyword>
<keyword id="KW-0963">Cytoplasm</keyword>
<keyword id="KW-0378">Hydrolase</keyword>
<keyword id="KW-0464">Manganese</keyword>
<keyword id="KW-0479">Metal-binding</keyword>
<keyword id="KW-0645">Protease</keyword>
<keyword id="KW-1185">Reference proteome</keyword>